<name>COX1_THEAN</name>
<geneLocation type="mitochondrion"/>
<protein>
    <recommendedName>
        <fullName>Cytochrome c oxidase subunit 1</fullName>
        <ecNumber>7.1.1.9</ecNumber>
    </recommendedName>
    <alternativeName>
        <fullName>Cytochrome c oxidase polypeptide I</fullName>
    </alternativeName>
</protein>
<organism>
    <name type="scientific">Theileria annulata</name>
    <dbReference type="NCBI Taxonomy" id="5874"/>
    <lineage>
        <taxon>Eukaryota</taxon>
        <taxon>Sar</taxon>
        <taxon>Alveolata</taxon>
        <taxon>Apicomplexa</taxon>
        <taxon>Aconoidasida</taxon>
        <taxon>Piroplasmida</taxon>
        <taxon>Theileriidae</taxon>
        <taxon>Theileria</taxon>
    </lineage>
</organism>
<reference key="1">
    <citation type="journal article" date="2005" name="Science">
        <title>Genome of the host-cell transforming parasite Theileria annulata compared with T. parva.</title>
        <authorList>
            <person name="Pain A."/>
            <person name="Renauld H."/>
            <person name="Berriman M."/>
            <person name="Murphy L."/>
            <person name="Yeats C.A."/>
            <person name="Weir W."/>
            <person name="Kerhornou A."/>
            <person name="Aslett M."/>
            <person name="Bishop R."/>
            <person name="Bouchier C."/>
            <person name="Cochet M."/>
            <person name="Coulson R.M.R."/>
            <person name="Cronin A."/>
            <person name="de Villiers E.P."/>
            <person name="Fraser A."/>
            <person name="Fosker N."/>
            <person name="Gardner M."/>
            <person name="Goble A."/>
            <person name="Griffiths-Jones S."/>
            <person name="Harris D.E."/>
            <person name="Katzer F."/>
            <person name="Larke N."/>
            <person name="Lord A."/>
            <person name="Maser P."/>
            <person name="McKellar S."/>
            <person name="Mooney P."/>
            <person name="Morton F."/>
            <person name="Nene V."/>
            <person name="O'Neil S."/>
            <person name="Price C."/>
            <person name="Quail M.A."/>
            <person name="Rabbinowitsch E."/>
            <person name="Rawlings N.D."/>
            <person name="Rutter S."/>
            <person name="Saunders D."/>
            <person name="Seeger K."/>
            <person name="Shah T."/>
            <person name="Squares R."/>
            <person name="Squares S."/>
            <person name="Tivey A."/>
            <person name="Walker A.R."/>
            <person name="Woodward J."/>
            <person name="Dobbelaere D.A.E."/>
            <person name="Langsley G."/>
            <person name="Rajandream M.A."/>
            <person name="McKeever D."/>
            <person name="Shiels B."/>
            <person name="Tait A."/>
            <person name="Barrell B.G."/>
            <person name="Hall N."/>
        </authorList>
    </citation>
    <scope>NUCLEOTIDE SEQUENCE [LARGE SCALE GENOMIC DNA]</scope>
    <source>
        <strain>Ankara</strain>
    </source>
</reference>
<keyword id="KW-0106">Calcium</keyword>
<keyword id="KW-0186">Copper</keyword>
<keyword id="KW-0249">Electron transport</keyword>
<keyword id="KW-0349">Heme</keyword>
<keyword id="KW-0408">Iron</keyword>
<keyword id="KW-0460">Magnesium</keyword>
<keyword id="KW-0472">Membrane</keyword>
<keyword id="KW-0479">Metal-binding</keyword>
<keyword id="KW-0496">Mitochondrion</keyword>
<keyword id="KW-0999">Mitochondrion inner membrane</keyword>
<keyword id="KW-1185">Reference proteome</keyword>
<keyword id="KW-0679">Respiratory chain</keyword>
<keyword id="KW-1278">Translocase</keyword>
<keyword id="KW-0812">Transmembrane</keyword>
<keyword id="KW-1133">Transmembrane helix</keyword>
<keyword id="KW-0813">Transport</keyword>
<sequence length="480" mass="53241">MVFEFVLSLFNSVSGNHKIIGISYLWLAYWFGMIGFYMSVLIRTELGMSGLKIITMDTLEIYNLLFTLHGLIMVFFNIMTGLFGGIGNYLYPVLLGSCDVVYPRVNLYSLLLQPIGFVLVVSSVYLEIGSGTGWTLYPPLSTSLSNIGIDLIIFGLLAAGIASTLSSINFITTFASIKTIGFVIDRISPAAWSIVLTSFLLLLSLPVVTAVFLMVFFDRNHSTMFFESSNSGDPILYQHLFWFFGHPEVYIMILPGFGIISLLLSTYTTKEMFGNQTMILAMGSIALLGCLVWGHHMYTSGLEADTRGYFTTVTILIALPTGNKIFNWVTTLQCVESIKSLGLILFAVLFIVNFVIGGTTGVVLGNAGLDVVLHDTVYVVGHFHFVLSIGAIISLICFIVYIQRMLFGIILSNRLLSLMAPIFMIAVLFTFLPMHFTGFSPLPRRIPDYPDEMWGWNFICTLGATMMLVLKLTVLFIISL</sequence>
<accession>Q4UJ69</accession>
<comment type="function">
    <text evidence="2">Component of the cytochrome c oxidase, the last enzyme in the mitochondrial electron transport chain which drives oxidative phosphorylation. The respiratory chain contains 3 multisubunit complexes succinate dehydrogenase (complex II, CII), ubiquinol-cytochrome c oxidoreductase (cytochrome b-c1 complex, complex III, CIII) and cytochrome c oxidase (complex IV, CIV), that cooperate to transfer electrons derived from NADH and succinate to molecular oxygen, creating an electrochemical gradient over the inner membrane that drives transmembrane transport and the ATP synthase. Cytochrome c oxidase is the component of the respiratory chain that catalyzes the reduction of oxygen to water. Electrons originating from reduced cytochrome c in the intermembrane space (IMS) are transferred via the dinuclear copper A center (CU(A)) of subunit 2 and heme A of subunit 1 to the active site in subunit 1, a binuclear center (BNC) formed by heme A3 and copper B (CU(B)). The BNC reduces molecular oxygen to 2 water molecules using 4 electrons from cytochrome c in the IMS and 4 protons from the mitochondrial matrix.</text>
</comment>
<comment type="catalytic activity">
    <reaction evidence="2">
        <text>4 Fe(II)-[cytochrome c] + O2 + 8 H(+)(in) = 4 Fe(III)-[cytochrome c] + 2 H2O + 4 H(+)(out)</text>
        <dbReference type="Rhea" id="RHEA:11436"/>
        <dbReference type="Rhea" id="RHEA-COMP:10350"/>
        <dbReference type="Rhea" id="RHEA-COMP:14399"/>
        <dbReference type="ChEBI" id="CHEBI:15377"/>
        <dbReference type="ChEBI" id="CHEBI:15378"/>
        <dbReference type="ChEBI" id="CHEBI:15379"/>
        <dbReference type="ChEBI" id="CHEBI:29033"/>
        <dbReference type="ChEBI" id="CHEBI:29034"/>
        <dbReference type="EC" id="7.1.1.9"/>
    </reaction>
    <physiologicalReaction direction="left-to-right" evidence="2">
        <dbReference type="Rhea" id="RHEA:11437"/>
    </physiologicalReaction>
</comment>
<comment type="cofactor">
    <cofactor evidence="2">
        <name>heme</name>
        <dbReference type="ChEBI" id="CHEBI:30413"/>
    </cofactor>
    <text evidence="2">Binds 2 heme A groups non-covalently per subunit.</text>
</comment>
<comment type="cofactor">
    <cofactor evidence="2">
        <name>Cu cation</name>
        <dbReference type="ChEBI" id="CHEBI:23378"/>
    </cofactor>
    <text evidence="2">Binds a copper B center.</text>
</comment>
<comment type="pathway">
    <text evidence="2">Energy metabolism; oxidative phosphorylation.</text>
</comment>
<comment type="subunit">
    <text evidence="2">Component of the cytochrome c oxidase (complex IV, CIV), a multisubunit enzyme composed of a catalytic core of 3 subunits and several supernumerary subunits. The complex exists as a monomer or a dimer and forms supercomplexes (SCs) in the inner mitochondrial membrane with ubiquinol-cytochrome c oxidoreductase (cytochrome b-c1 complex, complex III, CIII).</text>
</comment>
<comment type="subcellular location">
    <subcellularLocation>
        <location evidence="2">Mitochondrion inner membrane</location>
        <topology evidence="2">Multi-pass membrane protein</topology>
    </subcellularLocation>
</comment>
<comment type="similarity">
    <text evidence="4">Belongs to the heme-copper respiratory oxidase family.</text>
</comment>
<comment type="sequence caution" evidence="4">
    <conflict type="erroneous initiation">
        <sequence resource="EMBL-CDS" id="CAI72674"/>
    </conflict>
</comment>
<gene>
    <name type="primary">MT-CO1</name>
    <name type="synonym">COI</name>
    <name type="synonym">COXI</name>
    <name type="synonym">MTCO1</name>
    <name type="ORF">Tap370b08.q2ca38.01</name>
</gene>
<feature type="chain" id="PRO_0000233106" description="Cytochrome c oxidase subunit 1">
    <location>
        <begin position="1"/>
        <end position="480"/>
    </location>
</feature>
<feature type="transmembrane region" description="Helical" evidence="3">
    <location>
        <begin position="22"/>
        <end position="42"/>
    </location>
</feature>
<feature type="transmembrane region" description="Helical" evidence="3">
    <location>
        <begin position="64"/>
        <end position="84"/>
    </location>
</feature>
<feature type="transmembrane region" description="Helical" evidence="3">
    <location>
        <begin position="109"/>
        <end position="129"/>
    </location>
</feature>
<feature type="transmembrane region" description="Helical" evidence="3">
    <location>
        <begin position="151"/>
        <end position="171"/>
    </location>
</feature>
<feature type="transmembrane region" description="Helical" evidence="3">
    <location>
        <begin position="194"/>
        <end position="214"/>
    </location>
</feature>
<feature type="transmembrane region" description="Helical" evidence="3">
    <location>
        <begin position="240"/>
        <end position="260"/>
    </location>
</feature>
<feature type="transmembrane region" description="Helical" evidence="3">
    <location>
        <begin position="278"/>
        <end position="298"/>
    </location>
</feature>
<feature type="transmembrane region" description="Helical" evidence="3">
    <location>
        <begin position="309"/>
        <end position="329"/>
    </location>
</feature>
<feature type="transmembrane region" description="Helical" evidence="3">
    <location>
        <begin position="343"/>
        <end position="363"/>
    </location>
</feature>
<feature type="transmembrane region" description="Helical" evidence="3">
    <location>
        <begin position="382"/>
        <end position="402"/>
    </location>
</feature>
<feature type="transmembrane region" description="Helical" evidence="3">
    <location>
        <begin position="416"/>
        <end position="436"/>
    </location>
</feature>
<feature type="transmembrane region" description="Helical" evidence="3">
    <location>
        <begin position="458"/>
        <end position="478"/>
    </location>
</feature>
<feature type="binding site" evidence="2">
    <location>
        <position position="45"/>
    </location>
    <ligand>
        <name>Ca(2+)</name>
        <dbReference type="ChEBI" id="CHEBI:29108"/>
    </ligand>
</feature>
<feature type="binding site" evidence="2">
    <location>
        <position position="50"/>
    </location>
    <ligand>
        <name>Ca(2+)</name>
        <dbReference type="ChEBI" id="CHEBI:29108"/>
    </ligand>
</feature>
<feature type="binding site" description="axial binding residue" evidence="2">
    <location>
        <position position="69"/>
    </location>
    <ligand>
        <name>Fe(II)-heme a</name>
        <dbReference type="ChEBI" id="CHEBI:61715"/>
        <note>low-spin</note>
    </ligand>
    <ligandPart>
        <name>Fe</name>
        <dbReference type="ChEBI" id="CHEBI:18248"/>
    </ligandPart>
</feature>
<feature type="binding site" evidence="2">
    <location>
        <position position="246"/>
    </location>
    <ligand>
        <name>Cu cation</name>
        <dbReference type="ChEBI" id="CHEBI:23378"/>
        <label>B</label>
    </ligand>
</feature>
<feature type="binding site" evidence="1">
    <location>
        <position position="250"/>
    </location>
    <ligand>
        <name>O2</name>
        <dbReference type="ChEBI" id="CHEBI:15379"/>
    </ligand>
</feature>
<feature type="binding site" evidence="2">
    <location>
        <position position="295"/>
    </location>
    <ligand>
        <name>Cu cation</name>
        <dbReference type="ChEBI" id="CHEBI:23378"/>
        <label>B</label>
    </ligand>
</feature>
<feature type="binding site" evidence="2">
    <location>
        <position position="296"/>
    </location>
    <ligand>
        <name>Cu cation</name>
        <dbReference type="ChEBI" id="CHEBI:23378"/>
        <label>B</label>
    </ligand>
</feature>
<feature type="binding site" evidence="2">
    <location>
        <position position="374"/>
    </location>
    <ligand>
        <name>Mg(2+)</name>
        <dbReference type="ChEBI" id="CHEBI:18420"/>
        <note>ligand shared with subunit 2</note>
    </ligand>
</feature>
<feature type="binding site" evidence="2">
    <location>
        <position position="375"/>
    </location>
    <ligand>
        <name>Mg(2+)</name>
        <dbReference type="ChEBI" id="CHEBI:18420"/>
        <note>ligand shared with subunit 2</note>
    </ligand>
</feature>
<feature type="binding site" description="axial binding residue" evidence="2">
    <location>
        <position position="382"/>
    </location>
    <ligand>
        <name>heme a3</name>
        <dbReference type="ChEBI" id="CHEBI:83282"/>
        <note>high-spin</note>
    </ligand>
    <ligandPart>
        <name>Fe</name>
        <dbReference type="ChEBI" id="CHEBI:18248"/>
    </ligandPart>
</feature>
<feature type="binding site" description="axial binding residue" evidence="2">
    <location>
        <position position="384"/>
    </location>
    <ligand>
        <name>Fe(II)-heme a</name>
        <dbReference type="ChEBI" id="CHEBI:61715"/>
        <note>low-spin</note>
    </ligand>
    <ligandPart>
        <name>Fe</name>
        <dbReference type="ChEBI" id="CHEBI:18248"/>
    </ligandPart>
</feature>
<feature type="binding site" evidence="2">
    <location>
        <position position="447"/>
    </location>
    <ligand>
        <name>Ca(2+)</name>
        <dbReference type="ChEBI" id="CHEBI:29108"/>
    </ligand>
</feature>
<feature type="cross-link" description="1'-histidyl-3'-tyrosine (His-Tyr)" evidence="2">
    <location>
        <begin position="246"/>
        <end position="250"/>
    </location>
</feature>
<dbReference type="EC" id="7.1.1.9"/>
<dbReference type="EMBL" id="CR940346">
    <property type="protein sequence ID" value="CAI72674.1"/>
    <property type="status" value="ALT_INIT"/>
    <property type="molecule type" value="Genomic_DNA"/>
</dbReference>
<dbReference type="SMR" id="Q4UJ69"/>
<dbReference type="FunCoup" id="Q4UJ69">
    <property type="interactions" value="33"/>
</dbReference>
<dbReference type="STRING" id="5874.Q4UJ69"/>
<dbReference type="VEuPathDB" id="PiroplasmaDB:Tap370b08.q2ca38.01"/>
<dbReference type="eggNOG" id="KOG4769">
    <property type="taxonomic scope" value="Eukaryota"/>
</dbReference>
<dbReference type="InParanoid" id="Q4UJ69"/>
<dbReference type="OrthoDB" id="385008at2759"/>
<dbReference type="UniPathway" id="UPA00705"/>
<dbReference type="Proteomes" id="UP000001950">
    <property type="component" value="Mitochondrion"/>
</dbReference>
<dbReference type="GO" id="GO:0005743">
    <property type="term" value="C:mitochondrial inner membrane"/>
    <property type="evidence" value="ECO:0007669"/>
    <property type="project" value="UniProtKB-SubCell"/>
</dbReference>
<dbReference type="GO" id="GO:0045277">
    <property type="term" value="C:respiratory chain complex IV"/>
    <property type="evidence" value="ECO:0000250"/>
    <property type="project" value="UniProtKB"/>
</dbReference>
<dbReference type="GO" id="GO:0004129">
    <property type="term" value="F:cytochrome-c oxidase activity"/>
    <property type="evidence" value="ECO:0007669"/>
    <property type="project" value="UniProtKB-EC"/>
</dbReference>
<dbReference type="GO" id="GO:0020037">
    <property type="term" value="F:heme binding"/>
    <property type="evidence" value="ECO:0007669"/>
    <property type="project" value="InterPro"/>
</dbReference>
<dbReference type="GO" id="GO:0046872">
    <property type="term" value="F:metal ion binding"/>
    <property type="evidence" value="ECO:0007669"/>
    <property type="project" value="UniProtKB-KW"/>
</dbReference>
<dbReference type="GO" id="GO:0015990">
    <property type="term" value="P:electron transport coupled proton transport"/>
    <property type="evidence" value="ECO:0007669"/>
    <property type="project" value="TreeGrafter"/>
</dbReference>
<dbReference type="GO" id="GO:0006123">
    <property type="term" value="P:mitochondrial electron transport, cytochrome c to oxygen"/>
    <property type="evidence" value="ECO:0007669"/>
    <property type="project" value="TreeGrafter"/>
</dbReference>
<dbReference type="FunFam" id="1.20.210.10:FF:000007">
    <property type="entry name" value="Cytochrome c oxidase subunit 1"/>
    <property type="match status" value="1"/>
</dbReference>
<dbReference type="Gene3D" id="1.20.210.10">
    <property type="entry name" value="Cytochrome c oxidase-like, subunit I domain"/>
    <property type="match status" value="1"/>
</dbReference>
<dbReference type="InterPro" id="IPR023616">
    <property type="entry name" value="Cyt_c_oxase-like_su1_dom"/>
</dbReference>
<dbReference type="InterPro" id="IPR036927">
    <property type="entry name" value="Cyt_c_oxase-like_su1_sf"/>
</dbReference>
<dbReference type="InterPro" id="IPR000883">
    <property type="entry name" value="Cyt_C_Oxase_1"/>
</dbReference>
<dbReference type="InterPro" id="IPR023615">
    <property type="entry name" value="Cyt_c_Oxase_su1_BS"/>
</dbReference>
<dbReference type="PANTHER" id="PTHR10422">
    <property type="entry name" value="CYTOCHROME C OXIDASE SUBUNIT 1"/>
    <property type="match status" value="1"/>
</dbReference>
<dbReference type="PANTHER" id="PTHR10422:SF18">
    <property type="entry name" value="CYTOCHROME C OXIDASE SUBUNIT 1"/>
    <property type="match status" value="1"/>
</dbReference>
<dbReference type="Pfam" id="PF00115">
    <property type="entry name" value="COX1"/>
    <property type="match status" value="1"/>
</dbReference>
<dbReference type="PRINTS" id="PR01165">
    <property type="entry name" value="CYCOXIDASEI"/>
</dbReference>
<dbReference type="SUPFAM" id="SSF81442">
    <property type="entry name" value="Cytochrome c oxidase subunit I-like"/>
    <property type="match status" value="1"/>
</dbReference>
<dbReference type="PROSITE" id="PS50855">
    <property type="entry name" value="COX1"/>
    <property type="match status" value="1"/>
</dbReference>
<dbReference type="PROSITE" id="PS00077">
    <property type="entry name" value="COX1_CUB"/>
    <property type="match status" value="1"/>
</dbReference>
<proteinExistence type="inferred from homology"/>
<evidence type="ECO:0000250" key="1">
    <source>
        <dbReference type="UniProtKB" id="P00396"/>
    </source>
</evidence>
<evidence type="ECO:0000250" key="2">
    <source>
        <dbReference type="UniProtKB" id="P00401"/>
    </source>
</evidence>
<evidence type="ECO:0000255" key="3"/>
<evidence type="ECO:0000305" key="4"/>